<sequence length="381" mass="42876">MTNLRKTHPLIKIVNHSFIDLPAPSNISAWWNFGSLLGACLIIQILTGLFLAMHYTADTLTAFSSVAHICRDVNYGWLIRNLHANGASMFFMCLFLHVGRGIYYGSYLYKETWNIGVILLLTVMATAFVGYVLPWGQMSFWGATVITNLLSAIPYIGTTLVEWIWGGFSVDKATLTRFFAFHFILPFIITALVLVHLLFLHETGSNNPSGINPDSDKIPFHPYYTIKDALGFMLMLLILLTLALFSPDMLGDPDNFSPAKPTEHSSHIKPEWYFLFAYAILRSIPNKLGGVLALLASILILLIIPLLHTSKQRSLMFRPISQTLFWILTANLITLTWIGGQPVEQPYIIIGQVASISYFLLIIVLMPLAGLFENYMLEPKW</sequence>
<reference key="1">
    <citation type="journal article" date="1997" name="Proc. R. Soc. B">
        <title>DNA phylogeny of the marsupial wolf resolved.</title>
        <authorList>
            <person name="Krajewski C."/>
            <person name="Buckley L."/>
            <person name="Westerman M."/>
        </authorList>
    </citation>
    <scope>NUCLEOTIDE SEQUENCE [GENOMIC DNA]</scope>
</reference>
<gene>
    <name type="primary">MT-CYB</name>
    <name type="synonym">COB</name>
    <name type="synonym">CYTB</name>
    <name type="synonym">MTCYB</name>
</gene>
<proteinExistence type="inferred from homology"/>
<protein>
    <recommendedName>
        <fullName>Cytochrome b</fullName>
    </recommendedName>
    <alternativeName>
        <fullName>Complex III subunit 3</fullName>
    </alternativeName>
    <alternativeName>
        <fullName>Complex III subunit III</fullName>
    </alternativeName>
    <alternativeName>
        <fullName>Cytochrome b-c1 complex subunit 3</fullName>
    </alternativeName>
    <alternativeName>
        <fullName>Ubiquinol-cytochrome-c reductase complex cytochrome b subunit</fullName>
    </alternativeName>
</protein>
<geneLocation type="mitochondrion"/>
<evidence type="ECO:0000250" key="1"/>
<evidence type="ECO:0000250" key="2">
    <source>
        <dbReference type="UniProtKB" id="P00157"/>
    </source>
</evidence>
<evidence type="ECO:0000255" key="3">
    <source>
        <dbReference type="PROSITE-ProRule" id="PRU00967"/>
    </source>
</evidence>
<evidence type="ECO:0000255" key="4">
    <source>
        <dbReference type="PROSITE-ProRule" id="PRU00968"/>
    </source>
</evidence>
<comment type="function">
    <text evidence="2">Component of the ubiquinol-cytochrome c reductase complex (complex III or cytochrome b-c1 complex) that is part of the mitochondrial respiratory chain. The b-c1 complex mediates electron transfer from ubiquinol to cytochrome c. Contributes to the generation of a proton gradient across the mitochondrial membrane that is then used for ATP synthesis.</text>
</comment>
<comment type="cofactor">
    <cofactor evidence="2">
        <name>heme b</name>
        <dbReference type="ChEBI" id="CHEBI:60344"/>
    </cofactor>
    <text evidence="2">Binds 2 heme b groups non-covalently.</text>
</comment>
<comment type="subunit">
    <text evidence="2">The cytochrome bc1 complex contains 11 subunits: 3 respiratory subunits (MT-CYB, CYC1 and UQCRFS1), 2 core proteins (UQCRC1 and UQCRC2) and 6 low-molecular weight proteins (UQCRH/QCR6, UQCRB/QCR7, UQCRQ/QCR8, UQCR10/QCR9, UQCR11/QCR10 and a cleavage product of UQCRFS1). This cytochrome bc1 complex then forms a dimer.</text>
</comment>
<comment type="subcellular location">
    <subcellularLocation>
        <location evidence="2">Mitochondrion inner membrane</location>
        <topology evidence="2">Multi-pass membrane protein</topology>
    </subcellularLocation>
</comment>
<comment type="miscellaneous">
    <text evidence="1">Heme 1 (or BL or b562) is low-potential and absorbs at about 562 nm, and heme 2 (or BH or b566) is high-potential and absorbs at about 566 nm.</text>
</comment>
<comment type="similarity">
    <text evidence="3 4">Belongs to the cytochrome b family.</text>
</comment>
<comment type="caution">
    <text evidence="2">The full-length protein contains only eight transmembrane helices, not nine as predicted by bioinformatics tools.</text>
</comment>
<name>CYB_OSPRU</name>
<accession>O03474</accession>
<organism>
    <name type="scientific">Osphranter rufus</name>
    <name type="common">Red kangaroo</name>
    <name type="synonym">Macropus rufus</name>
    <dbReference type="NCBI Taxonomy" id="9321"/>
    <lineage>
        <taxon>Eukaryota</taxon>
        <taxon>Metazoa</taxon>
        <taxon>Chordata</taxon>
        <taxon>Craniata</taxon>
        <taxon>Vertebrata</taxon>
        <taxon>Euteleostomi</taxon>
        <taxon>Mammalia</taxon>
        <taxon>Metatheria</taxon>
        <taxon>Diprotodontia</taxon>
        <taxon>Macropodidae</taxon>
        <taxon>Osphranter</taxon>
    </lineage>
</organism>
<feature type="chain" id="PRO_0000061146" description="Cytochrome b">
    <location>
        <begin position="1"/>
        <end position="381"/>
    </location>
</feature>
<feature type="transmembrane region" description="Helical" evidence="2">
    <location>
        <begin position="33"/>
        <end position="53"/>
    </location>
</feature>
<feature type="transmembrane region" description="Helical" evidence="2">
    <location>
        <begin position="77"/>
        <end position="98"/>
    </location>
</feature>
<feature type="transmembrane region" description="Helical" evidence="2">
    <location>
        <begin position="113"/>
        <end position="133"/>
    </location>
</feature>
<feature type="transmembrane region" description="Helical" evidence="2">
    <location>
        <begin position="178"/>
        <end position="198"/>
    </location>
</feature>
<feature type="transmembrane region" description="Helical" evidence="2">
    <location>
        <begin position="226"/>
        <end position="246"/>
    </location>
</feature>
<feature type="transmembrane region" description="Helical" evidence="2">
    <location>
        <begin position="288"/>
        <end position="308"/>
    </location>
</feature>
<feature type="transmembrane region" description="Helical" evidence="2">
    <location>
        <begin position="320"/>
        <end position="340"/>
    </location>
</feature>
<feature type="transmembrane region" description="Helical" evidence="2">
    <location>
        <begin position="347"/>
        <end position="367"/>
    </location>
</feature>
<feature type="binding site" description="axial binding residue" evidence="2">
    <location>
        <position position="83"/>
    </location>
    <ligand>
        <name>heme b</name>
        <dbReference type="ChEBI" id="CHEBI:60344"/>
        <label>b562</label>
    </ligand>
    <ligandPart>
        <name>Fe</name>
        <dbReference type="ChEBI" id="CHEBI:18248"/>
    </ligandPart>
</feature>
<feature type="binding site" description="axial binding residue" evidence="2">
    <location>
        <position position="97"/>
    </location>
    <ligand>
        <name>heme b</name>
        <dbReference type="ChEBI" id="CHEBI:60344"/>
        <label>b566</label>
    </ligand>
    <ligandPart>
        <name>Fe</name>
        <dbReference type="ChEBI" id="CHEBI:18248"/>
    </ligandPart>
</feature>
<feature type="binding site" description="axial binding residue" evidence="2">
    <location>
        <position position="182"/>
    </location>
    <ligand>
        <name>heme b</name>
        <dbReference type="ChEBI" id="CHEBI:60344"/>
        <label>b562</label>
    </ligand>
    <ligandPart>
        <name>Fe</name>
        <dbReference type="ChEBI" id="CHEBI:18248"/>
    </ligandPart>
</feature>
<feature type="binding site" description="axial binding residue" evidence="2">
    <location>
        <position position="196"/>
    </location>
    <ligand>
        <name>heme b</name>
        <dbReference type="ChEBI" id="CHEBI:60344"/>
        <label>b566</label>
    </ligand>
    <ligandPart>
        <name>Fe</name>
        <dbReference type="ChEBI" id="CHEBI:18248"/>
    </ligandPart>
</feature>
<feature type="binding site" evidence="2">
    <location>
        <position position="201"/>
    </location>
    <ligand>
        <name>a ubiquinone</name>
        <dbReference type="ChEBI" id="CHEBI:16389"/>
    </ligand>
</feature>
<keyword id="KW-0249">Electron transport</keyword>
<keyword id="KW-0349">Heme</keyword>
<keyword id="KW-0408">Iron</keyword>
<keyword id="KW-0472">Membrane</keyword>
<keyword id="KW-0479">Metal-binding</keyword>
<keyword id="KW-0496">Mitochondrion</keyword>
<keyword id="KW-0999">Mitochondrion inner membrane</keyword>
<keyword id="KW-0679">Respiratory chain</keyword>
<keyword id="KW-0812">Transmembrane</keyword>
<keyword id="KW-1133">Transmembrane helix</keyword>
<keyword id="KW-0813">Transport</keyword>
<keyword id="KW-0830">Ubiquinone</keyword>
<dbReference type="EMBL" id="U87136">
    <property type="protein sequence ID" value="AAB91324.1"/>
    <property type="molecule type" value="Genomic_DNA"/>
</dbReference>
<dbReference type="SMR" id="O03474"/>
<dbReference type="GO" id="GO:0005743">
    <property type="term" value="C:mitochondrial inner membrane"/>
    <property type="evidence" value="ECO:0007669"/>
    <property type="project" value="UniProtKB-SubCell"/>
</dbReference>
<dbReference type="GO" id="GO:0045275">
    <property type="term" value="C:respiratory chain complex III"/>
    <property type="evidence" value="ECO:0007669"/>
    <property type="project" value="InterPro"/>
</dbReference>
<dbReference type="GO" id="GO:0046872">
    <property type="term" value="F:metal ion binding"/>
    <property type="evidence" value="ECO:0007669"/>
    <property type="project" value="UniProtKB-KW"/>
</dbReference>
<dbReference type="GO" id="GO:0008121">
    <property type="term" value="F:ubiquinol-cytochrome-c reductase activity"/>
    <property type="evidence" value="ECO:0007669"/>
    <property type="project" value="InterPro"/>
</dbReference>
<dbReference type="GO" id="GO:0006122">
    <property type="term" value="P:mitochondrial electron transport, ubiquinol to cytochrome c"/>
    <property type="evidence" value="ECO:0007669"/>
    <property type="project" value="TreeGrafter"/>
</dbReference>
<dbReference type="CDD" id="cd00290">
    <property type="entry name" value="cytochrome_b_C"/>
    <property type="match status" value="1"/>
</dbReference>
<dbReference type="CDD" id="cd00284">
    <property type="entry name" value="Cytochrome_b_N"/>
    <property type="match status" value="1"/>
</dbReference>
<dbReference type="FunFam" id="1.20.810.10:FF:000002">
    <property type="entry name" value="Cytochrome b"/>
    <property type="match status" value="1"/>
</dbReference>
<dbReference type="Gene3D" id="1.20.810.10">
    <property type="entry name" value="Cytochrome Bc1 Complex, Chain C"/>
    <property type="match status" value="1"/>
</dbReference>
<dbReference type="InterPro" id="IPR005798">
    <property type="entry name" value="Cyt_b/b6_C"/>
</dbReference>
<dbReference type="InterPro" id="IPR036150">
    <property type="entry name" value="Cyt_b/b6_C_sf"/>
</dbReference>
<dbReference type="InterPro" id="IPR005797">
    <property type="entry name" value="Cyt_b/b6_N"/>
</dbReference>
<dbReference type="InterPro" id="IPR027387">
    <property type="entry name" value="Cytb/b6-like_sf"/>
</dbReference>
<dbReference type="InterPro" id="IPR030689">
    <property type="entry name" value="Cytochrome_b"/>
</dbReference>
<dbReference type="InterPro" id="IPR048260">
    <property type="entry name" value="Cytochrome_b_C_euk/bac"/>
</dbReference>
<dbReference type="InterPro" id="IPR048259">
    <property type="entry name" value="Cytochrome_b_N_euk/bac"/>
</dbReference>
<dbReference type="InterPro" id="IPR016174">
    <property type="entry name" value="Di-haem_cyt_TM"/>
</dbReference>
<dbReference type="PANTHER" id="PTHR19271">
    <property type="entry name" value="CYTOCHROME B"/>
    <property type="match status" value="1"/>
</dbReference>
<dbReference type="PANTHER" id="PTHR19271:SF16">
    <property type="entry name" value="CYTOCHROME B"/>
    <property type="match status" value="1"/>
</dbReference>
<dbReference type="Pfam" id="PF00032">
    <property type="entry name" value="Cytochrom_B_C"/>
    <property type="match status" value="1"/>
</dbReference>
<dbReference type="Pfam" id="PF00033">
    <property type="entry name" value="Cytochrome_B"/>
    <property type="match status" value="1"/>
</dbReference>
<dbReference type="PIRSF" id="PIRSF038885">
    <property type="entry name" value="COB"/>
    <property type="match status" value="1"/>
</dbReference>
<dbReference type="SUPFAM" id="SSF81648">
    <property type="entry name" value="a domain/subunit of cytochrome bc1 complex (Ubiquinol-cytochrome c reductase)"/>
    <property type="match status" value="1"/>
</dbReference>
<dbReference type="SUPFAM" id="SSF81342">
    <property type="entry name" value="Transmembrane di-heme cytochromes"/>
    <property type="match status" value="1"/>
</dbReference>
<dbReference type="PROSITE" id="PS51003">
    <property type="entry name" value="CYTB_CTER"/>
    <property type="match status" value="1"/>
</dbReference>
<dbReference type="PROSITE" id="PS51002">
    <property type="entry name" value="CYTB_NTER"/>
    <property type="match status" value="1"/>
</dbReference>